<protein>
    <recommendedName>
        <fullName evidence="1">4-hydroxy-tetrahydrodipicolinate reductase</fullName>
        <shortName evidence="1">HTPA reductase</shortName>
        <ecNumber evidence="1">1.17.1.8</ecNumber>
    </recommendedName>
</protein>
<organism>
    <name type="scientific">Burkholderia ambifaria (strain ATCC BAA-244 / DSM 16087 / CCUG 44356 / LMG 19182 / AMMD)</name>
    <name type="common">Burkholderia cepacia (strain AMMD)</name>
    <dbReference type="NCBI Taxonomy" id="339670"/>
    <lineage>
        <taxon>Bacteria</taxon>
        <taxon>Pseudomonadati</taxon>
        <taxon>Pseudomonadota</taxon>
        <taxon>Betaproteobacteria</taxon>
        <taxon>Burkholderiales</taxon>
        <taxon>Burkholderiaceae</taxon>
        <taxon>Burkholderia</taxon>
        <taxon>Burkholderia cepacia complex</taxon>
    </lineage>
</organism>
<accession>Q0BIB8</accession>
<feature type="chain" id="PRO_1000008541" description="4-hydroxy-tetrahydrodipicolinate reductase">
    <location>
        <begin position="1"/>
        <end position="265"/>
    </location>
</feature>
<feature type="active site" description="Proton donor/acceptor" evidence="1">
    <location>
        <position position="153"/>
    </location>
</feature>
<feature type="active site" description="Proton donor" evidence="1">
    <location>
        <position position="157"/>
    </location>
</feature>
<feature type="binding site" evidence="1">
    <location>
        <begin position="7"/>
        <end position="12"/>
    </location>
    <ligand>
        <name>NAD(+)</name>
        <dbReference type="ChEBI" id="CHEBI:57540"/>
    </ligand>
</feature>
<feature type="binding site" evidence="1">
    <location>
        <position position="33"/>
    </location>
    <ligand>
        <name>NAD(+)</name>
        <dbReference type="ChEBI" id="CHEBI:57540"/>
    </ligand>
</feature>
<feature type="binding site" evidence="1">
    <location>
        <position position="34"/>
    </location>
    <ligand>
        <name>NADP(+)</name>
        <dbReference type="ChEBI" id="CHEBI:58349"/>
    </ligand>
</feature>
<feature type="binding site" evidence="1">
    <location>
        <begin position="96"/>
        <end position="98"/>
    </location>
    <ligand>
        <name>NAD(+)</name>
        <dbReference type="ChEBI" id="CHEBI:57540"/>
    </ligand>
</feature>
<feature type="binding site" evidence="1">
    <location>
        <begin position="120"/>
        <end position="123"/>
    </location>
    <ligand>
        <name>NAD(+)</name>
        <dbReference type="ChEBI" id="CHEBI:57540"/>
    </ligand>
</feature>
<feature type="binding site" evidence="1">
    <location>
        <position position="154"/>
    </location>
    <ligand>
        <name>(S)-2,3,4,5-tetrahydrodipicolinate</name>
        <dbReference type="ChEBI" id="CHEBI:16845"/>
    </ligand>
</feature>
<feature type="binding site" evidence="1">
    <location>
        <begin position="163"/>
        <end position="164"/>
    </location>
    <ligand>
        <name>(S)-2,3,4,5-tetrahydrodipicolinate</name>
        <dbReference type="ChEBI" id="CHEBI:16845"/>
    </ligand>
</feature>
<reference key="1">
    <citation type="submission" date="2006-08" db="EMBL/GenBank/DDBJ databases">
        <title>Complete sequence of chromosome 1 of Burkholderia cepacia AMMD.</title>
        <authorList>
            <person name="Copeland A."/>
            <person name="Lucas S."/>
            <person name="Lapidus A."/>
            <person name="Barry K."/>
            <person name="Detter J.C."/>
            <person name="Glavina del Rio T."/>
            <person name="Hammon N."/>
            <person name="Israni S."/>
            <person name="Pitluck S."/>
            <person name="Bruce D."/>
            <person name="Chain P."/>
            <person name="Malfatti S."/>
            <person name="Shin M."/>
            <person name="Vergez L."/>
            <person name="Schmutz J."/>
            <person name="Larimer F."/>
            <person name="Land M."/>
            <person name="Hauser L."/>
            <person name="Kyrpides N."/>
            <person name="Kim E."/>
            <person name="Parke J."/>
            <person name="Coenye T."/>
            <person name="Konstantinidis K."/>
            <person name="Ramette A."/>
            <person name="Tiedje J."/>
            <person name="Richardson P."/>
        </authorList>
    </citation>
    <scope>NUCLEOTIDE SEQUENCE [LARGE SCALE GENOMIC DNA]</scope>
    <source>
        <strain>ATCC BAA-244 / DSM 16087 / CCUG 44356 / LMG 19182 / AMMD</strain>
    </source>
</reference>
<name>DAPB_BURCM</name>
<keyword id="KW-0028">Amino-acid biosynthesis</keyword>
<keyword id="KW-0963">Cytoplasm</keyword>
<keyword id="KW-0220">Diaminopimelate biosynthesis</keyword>
<keyword id="KW-0457">Lysine biosynthesis</keyword>
<keyword id="KW-0520">NAD</keyword>
<keyword id="KW-0521">NADP</keyword>
<keyword id="KW-0560">Oxidoreductase</keyword>
<dbReference type="EC" id="1.17.1.8" evidence="1"/>
<dbReference type="EMBL" id="CP000440">
    <property type="protein sequence ID" value="ABI86105.1"/>
    <property type="molecule type" value="Genomic_DNA"/>
</dbReference>
<dbReference type="RefSeq" id="WP_011655956.1">
    <property type="nucleotide sequence ID" value="NC_008390.1"/>
</dbReference>
<dbReference type="SMR" id="Q0BIB8"/>
<dbReference type="GeneID" id="93084038"/>
<dbReference type="KEGG" id="bam:Bamb_0546"/>
<dbReference type="PATRIC" id="fig|339670.21.peg.1056"/>
<dbReference type="eggNOG" id="COG0289">
    <property type="taxonomic scope" value="Bacteria"/>
</dbReference>
<dbReference type="UniPathway" id="UPA00034">
    <property type="reaction ID" value="UER00018"/>
</dbReference>
<dbReference type="Proteomes" id="UP000000662">
    <property type="component" value="Chromosome 1"/>
</dbReference>
<dbReference type="GO" id="GO:0005829">
    <property type="term" value="C:cytosol"/>
    <property type="evidence" value="ECO:0007669"/>
    <property type="project" value="TreeGrafter"/>
</dbReference>
<dbReference type="GO" id="GO:0008839">
    <property type="term" value="F:4-hydroxy-tetrahydrodipicolinate reductase"/>
    <property type="evidence" value="ECO:0007669"/>
    <property type="project" value="UniProtKB-EC"/>
</dbReference>
<dbReference type="GO" id="GO:0051287">
    <property type="term" value="F:NAD binding"/>
    <property type="evidence" value="ECO:0007669"/>
    <property type="project" value="UniProtKB-UniRule"/>
</dbReference>
<dbReference type="GO" id="GO:0050661">
    <property type="term" value="F:NADP binding"/>
    <property type="evidence" value="ECO:0007669"/>
    <property type="project" value="UniProtKB-UniRule"/>
</dbReference>
<dbReference type="GO" id="GO:0016726">
    <property type="term" value="F:oxidoreductase activity, acting on CH or CH2 groups, NAD or NADP as acceptor"/>
    <property type="evidence" value="ECO:0007669"/>
    <property type="project" value="UniProtKB-UniRule"/>
</dbReference>
<dbReference type="GO" id="GO:0019877">
    <property type="term" value="P:diaminopimelate biosynthetic process"/>
    <property type="evidence" value="ECO:0007669"/>
    <property type="project" value="UniProtKB-UniRule"/>
</dbReference>
<dbReference type="GO" id="GO:0009089">
    <property type="term" value="P:lysine biosynthetic process via diaminopimelate"/>
    <property type="evidence" value="ECO:0007669"/>
    <property type="project" value="UniProtKB-UniRule"/>
</dbReference>
<dbReference type="CDD" id="cd02274">
    <property type="entry name" value="DHDPR_N"/>
    <property type="match status" value="1"/>
</dbReference>
<dbReference type="FunFam" id="3.30.360.10:FF:000004">
    <property type="entry name" value="4-hydroxy-tetrahydrodipicolinate reductase"/>
    <property type="match status" value="1"/>
</dbReference>
<dbReference type="FunFam" id="3.40.50.720:FF:000048">
    <property type="entry name" value="4-hydroxy-tetrahydrodipicolinate reductase"/>
    <property type="match status" value="1"/>
</dbReference>
<dbReference type="Gene3D" id="3.30.360.10">
    <property type="entry name" value="Dihydrodipicolinate Reductase, domain 2"/>
    <property type="match status" value="1"/>
</dbReference>
<dbReference type="Gene3D" id="3.40.50.720">
    <property type="entry name" value="NAD(P)-binding Rossmann-like Domain"/>
    <property type="match status" value="1"/>
</dbReference>
<dbReference type="HAMAP" id="MF_00102">
    <property type="entry name" value="DapB"/>
    <property type="match status" value="1"/>
</dbReference>
<dbReference type="InterPro" id="IPR022663">
    <property type="entry name" value="DapB_C"/>
</dbReference>
<dbReference type="InterPro" id="IPR000846">
    <property type="entry name" value="DapB_N"/>
</dbReference>
<dbReference type="InterPro" id="IPR022664">
    <property type="entry name" value="DapB_N_CS"/>
</dbReference>
<dbReference type="InterPro" id="IPR023940">
    <property type="entry name" value="DHDPR_bac"/>
</dbReference>
<dbReference type="InterPro" id="IPR036291">
    <property type="entry name" value="NAD(P)-bd_dom_sf"/>
</dbReference>
<dbReference type="NCBIfam" id="TIGR00036">
    <property type="entry name" value="dapB"/>
    <property type="match status" value="1"/>
</dbReference>
<dbReference type="PANTHER" id="PTHR20836:SF0">
    <property type="entry name" value="4-HYDROXY-TETRAHYDRODIPICOLINATE REDUCTASE 1, CHLOROPLASTIC-RELATED"/>
    <property type="match status" value="1"/>
</dbReference>
<dbReference type="PANTHER" id="PTHR20836">
    <property type="entry name" value="DIHYDRODIPICOLINATE REDUCTASE"/>
    <property type="match status" value="1"/>
</dbReference>
<dbReference type="Pfam" id="PF05173">
    <property type="entry name" value="DapB_C"/>
    <property type="match status" value="1"/>
</dbReference>
<dbReference type="Pfam" id="PF01113">
    <property type="entry name" value="DapB_N"/>
    <property type="match status" value="1"/>
</dbReference>
<dbReference type="PIRSF" id="PIRSF000161">
    <property type="entry name" value="DHPR"/>
    <property type="match status" value="1"/>
</dbReference>
<dbReference type="SUPFAM" id="SSF55347">
    <property type="entry name" value="Glyceraldehyde-3-phosphate dehydrogenase-like, C-terminal domain"/>
    <property type="match status" value="1"/>
</dbReference>
<dbReference type="SUPFAM" id="SSF51735">
    <property type="entry name" value="NAD(P)-binding Rossmann-fold domains"/>
    <property type="match status" value="1"/>
</dbReference>
<dbReference type="PROSITE" id="PS01298">
    <property type="entry name" value="DAPB"/>
    <property type="match status" value="1"/>
</dbReference>
<proteinExistence type="inferred from homology"/>
<comment type="function">
    <text evidence="1">Catalyzes the conversion of 4-hydroxy-tetrahydrodipicolinate (HTPA) to tetrahydrodipicolinate.</text>
</comment>
<comment type="catalytic activity">
    <reaction evidence="1">
        <text>(S)-2,3,4,5-tetrahydrodipicolinate + NAD(+) + H2O = (2S,4S)-4-hydroxy-2,3,4,5-tetrahydrodipicolinate + NADH + H(+)</text>
        <dbReference type="Rhea" id="RHEA:35323"/>
        <dbReference type="ChEBI" id="CHEBI:15377"/>
        <dbReference type="ChEBI" id="CHEBI:15378"/>
        <dbReference type="ChEBI" id="CHEBI:16845"/>
        <dbReference type="ChEBI" id="CHEBI:57540"/>
        <dbReference type="ChEBI" id="CHEBI:57945"/>
        <dbReference type="ChEBI" id="CHEBI:67139"/>
        <dbReference type="EC" id="1.17.1.8"/>
    </reaction>
</comment>
<comment type="catalytic activity">
    <reaction evidence="1">
        <text>(S)-2,3,4,5-tetrahydrodipicolinate + NADP(+) + H2O = (2S,4S)-4-hydroxy-2,3,4,5-tetrahydrodipicolinate + NADPH + H(+)</text>
        <dbReference type="Rhea" id="RHEA:35331"/>
        <dbReference type="ChEBI" id="CHEBI:15377"/>
        <dbReference type="ChEBI" id="CHEBI:15378"/>
        <dbReference type="ChEBI" id="CHEBI:16845"/>
        <dbReference type="ChEBI" id="CHEBI:57783"/>
        <dbReference type="ChEBI" id="CHEBI:58349"/>
        <dbReference type="ChEBI" id="CHEBI:67139"/>
        <dbReference type="EC" id="1.17.1.8"/>
    </reaction>
</comment>
<comment type="pathway">
    <text evidence="1">Amino-acid biosynthesis; L-lysine biosynthesis via DAP pathway; (S)-tetrahydrodipicolinate from L-aspartate: step 4/4.</text>
</comment>
<comment type="subcellular location">
    <subcellularLocation>
        <location evidence="1">Cytoplasm</location>
    </subcellularLocation>
</comment>
<comment type="similarity">
    <text evidence="1">Belongs to the DapB family.</text>
</comment>
<comment type="caution">
    <text evidence="2">Was originally thought to be a dihydrodipicolinate reductase (DHDPR), catalyzing the conversion of dihydrodipicolinate to tetrahydrodipicolinate. However, it was shown in E.coli that the substrate of the enzymatic reaction is not dihydrodipicolinate (DHDP) but in fact (2S,4S)-4-hydroxy-2,3,4,5-tetrahydrodipicolinic acid (HTPA), the product released by the DapA-catalyzed reaction.</text>
</comment>
<evidence type="ECO:0000255" key="1">
    <source>
        <dbReference type="HAMAP-Rule" id="MF_00102"/>
    </source>
</evidence>
<evidence type="ECO:0000305" key="2"/>
<sequence length="265" mass="27874">MKIAIAGASGRMGRMLIEAVLNDSDAQLVGALDRADSPFLGQDAGAFLGKETGVKLTDDLDAVFAQADYLIDFTRPEGTIAHVAAALRHEVKLVIGTTGFTAEQKAELQAAAARIGIVFAANMSVGVNVTLKLLEFAAKHFSHGYDIEIIEAHHRHKVDAPSGTALMMGEAVAGALGRSLEDCAVYGRQGVTGERDPSTIGFAAVRGGDIVGDHTVLFAGIGERIEITHKSSSRVSYAQGALRAVRFLSARGAGLFDMQDVLGLR</sequence>
<gene>
    <name evidence="1" type="primary">dapB</name>
    <name type="ordered locus">Bamb_0546</name>
</gene>